<evidence type="ECO:0000255" key="1">
    <source>
        <dbReference type="HAMAP-Rule" id="MF_01342"/>
    </source>
</evidence>
<evidence type="ECO:0000305" key="2"/>
<feature type="chain" id="PRO_1000054622" description="Large ribosomal subunit protein uL16">
    <location>
        <begin position="1"/>
        <end position="137"/>
    </location>
</feature>
<dbReference type="EMBL" id="CP000803">
    <property type="protein sequence ID" value="ABU60736.1"/>
    <property type="molecule type" value="Genomic_DNA"/>
</dbReference>
<dbReference type="RefSeq" id="WP_010030778.1">
    <property type="nucleotide sequence ID" value="NC_009749.1"/>
</dbReference>
<dbReference type="SMR" id="A7N9T3"/>
<dbReference type="KEGG" id="fta:FTA_0259"/>
<dbReference type="HOGENOM" id="CLU_078858_2_1_6"/>
<dbReference type="GO" id="GO:0022625">
    <property type="term" value="C:cytosolic large ribosomal subunit"/>
    <property type="evidence" value="ECO:0007669"/>
    <property type="project" value="TreeGrafter"/>
</dbReference>
<dbReference type="GO" id="GO:0019843">
    <property type="term" value="F:rRNA binding"/>
    <property type="evidence" value="ECO:0007669"/>
    <property type="project" value="UniProtKB-UniRule"/>
</dbReference>
<dbReference type="GO" id="GO:0003735">
    <property type="term" value="F:structural constituent of ribosome"/>
    <property type="evidence" value="ECO:0007669"/>
    <property type="project" value="InterPro"/>
</dbReference>
<dbReference type="GO" id="GO:0000049">
    <property type="term" value="F:tRNA binding"/>
    <property type="evidence" value="ECO:0007669"/>
    <property type="project" value="UniProtKB-KW"/>
</dbReference>
<dbReference type="GO" id="GO:0006412">
    <property type="term" value="P:translation"/>
    <property type="evidence" value="ECO:0007669"/>
    <property type="project" value="UniProtKB-UniRule"/>
</dbReference>
<dbReference type="CDD" id="cd01433">
    <property type="entry name" value="Ribosomal_L16_L10e"/>
    <property type="match status" value="1"/>
</dbReference>
<dbReference type="FunFam" id="3.90.1170.10:FF:000001">
    <property type="entry name" value="50S ribosomal protein L16"/>
    <property type="match status" value="1"/>
</dbReference>
<dbReference type="Gene3D" id="3.90.1170.10">
    <property type="entry name" value="Ribosomal protein L10e/L16"/>
    <property type="match status" value="1"/>
</dbReference>
<dbReference type="HAMAP" id="MF_01342">
    <property type="entry name" value="Ribosomal_uL16"/>
    <property type="match status" value="1"/>
</dbReference>
<dbReference type="InterPro" id="IPR047873">
    <property type="entry name" value="Ribosomal_uL16"/>
</dbReference>
<dbReference type="InterPro" id="IPR000114">
    <property type="entry name" value="Ribosomal_uL16_bact-type"/>
</dbReference>
<dbReference type="InterPro" id="IPR020798">
    <property type="entry name" value="Ribosomal_uL16_CS"/>
</dbReference>
<dbReference type="InterPro" id="IPR016180">
    <property type="entry name" value="Ribosomal_uL16_dom"/>
</dbReference>
<dbReference type="InterPro" id="IPR036920">
    <property type="entry name" value="Ribosomal_uL16_sf"/>
</dbReference>
<dbReference type="NCBIfam" id="TIGR01164">
    <property type="entry name" value="rplP_bact"/>
    <property type="match status" value="1"/>
</dbReference>
<dbReference type="PANTHER" id="PTHR12220">
    <property type="entry name" value="50S/60S RIBOSOMAL PROTEIN L16"/>
    <property type="match status" value="1"/>
</dbReference>
<dbReference type="PANTHER" id="PTHR12220:SF13">
    <property type="entry name" value="LARGE RIBOSOMAL SUBUNIT PROTEIN UL16M"/>
    <property type="match status" value="1"/>
</dbReference>
<dbReference type="Pfam" id="PF00252">
    <property type="entry name" value="Ribosomal_L16"/>
    <property type="match status" value="1"/>
</dbReference>
<dbReference type="PRINTS" id="PR00060">
    <property type="entry name" value="RIBOSOMALL16"/>
</dbReference>
<dbReference type="SUPFAM" id="SSF54686">
    <property type="entry name" value="Ribosomal protein L16p/L10e"/>
    <property type="match status" value="1"/>
</dbReference>
<dbReference type="PROSITE" id="PS00586">
    <property type="entry name" value="RIBOSOMAL_L16_1"/>
    <property type="match status" value="1"/>
</dbReference>
<dbReference type="PROSITE" id="PS00701">
    <property type="entry name" value="RIBOSOMAL_L16_2"/>
    <property type="match status" value="1"/>
</dbReference>
<keyword id="KW-0687">Ribonucleoprotein</keyword>
<keyword id="KW-0689">Ribosomal protein</keyword>
<keyword id="KW-0694">RNA-binding</keyword>
<keyword id="KW-0699">rRNA-binding</keyword>
<keyword id="KW-0820">tRNA-binding</keyword>
<comment type="function">
    <text evidence="1">Binds 23S rRNA and is also seen to make contacts with the A and possibly P site tRNAs.</text>
</comment>
<comment type="subunit">
    <text evidence="1">Part of the 50S ribosomal subunit.</text>
</comment>
<comment type="similarity">
    <text evidence="1">Belongs to the universal ribosomal protein uL16 family.</text>
</comment>
<accession>A7N9T3</accession>
<reference key="1">
    <citation type="journal article" date="2009" name="PLoS ONE">
        <title>Complete genome sequence of Francisella tularensis subspecies holarctica FTNF002-00.</title>
        <authorList>
            <person name="Barabote R.D."/>
            <person name="Xie G."/>
            <person name="Brettin T.S."/>
            <person name="Hinrichs S.H."/>
            <person name="Fey P.D."/>
            <person name="Jay J.J."/>
            <person name="Engle J.L."/>
            <person name="Godbole S.D."/>
            <person name="Noronha J.M."/>
            <person name="Scheuermann R.H."/>
            <person name="Zhou L.W."/>
            <person name="Lion C."/>
            <person name="Dempsey M.P."/>
        </authorList>
    </citation>
    <scope>NUCLEOTIDE SEQUENCE [LARGE SCALE GENOMIC DNA]</scope>
    <source>
        <strain>FTNF002-00 / FTA</strain>
    </source>
</reference>
<name>RL16_FRATF</name>
<proteinExistence type="inferred from homology"/>
<sequence length="137" mass="15710">MLQPKRTKFRKQQKLRNRGLAYRGNKVSFGEFGLQATSRGRITARQIEAGRRAISRHIKRGGKIWIRIFPDKPITQKPLEVRMGKGKGSVEYWVAQIQPGRVLYEITGVKEELAREAFARAAAKMPVQTTFVEKQVM</sequence>
<protein>
    <recommendedName>
        <fullName evidence="1">Large ribosomal subunit protein uL16</fullName>
    </recommendedName>
    <alternativeName>
        <fullName evidence="2">50S ribosomal protein L16</fullName>
    </alternativeName>
</protein>
<organism>
    <name type="scientific">Francisella tularensis subsp. holarctica (strain FTNF002-00 / FTA)</name>
    <dbReference type="NCBI Taxonomy" id="458234"/>
    <lineage>
        <taxon>Bacteria</taxon>
        <taxon>Pseudomonadati</taxon>
        <taxon>Pseudomonadota</taxon>
        <taxon>Gammaproteobacteria</taxon>
        <taxon>Thiotrichales</taxon>
        <taxon>Francisellaceae</taxon>
        <taxon>Francisella</taxon>
    </lineage>
</organism>
<gene>
    <name evidence="1" type="primary">rplP</name>
    <name type="ordered locus">FTA_0259</name>
</gene>